<gene>
    <name evidence="1" type="primary">pyrF</name>
    <name type="ordered locus">Ppro_1676</name>
</gene>
<proteinExistence type="inferred from homology"/>
<feature type="chain" id="PRO_1000065925" description="Orotidine 5'-phosphate decarboxylase">
    <location>
        <begin position="1"/>
        <end position="240"/>
    </location>
</feature>
<feature type="active site" description="Proton donor" evidence="1">
    <location>
        <position position="66"/>
    </location>
</feature>
<feature type="binding site" evidence="1">
    <location>
        <position position="15"/>
    </location>
    <ligand>
        <name>substrate</name>
    </ligand>
</feature>
<feature type="binding site" evidence="1">
    <location>
        <position position="37"/>
    </location>
    <ligand>
        <name>substrate</name>
    </ligand>
</feature>
<feature type="binding site" evidence="1">
    <location>
        <begin position="64"/>
        <end position="73"/>
    </location>
    <ligand>
        <name>substrate</name>
    </ligand>
</feature>
<feature type="binding site" evidence="1">
    <location>
        <position position="125"/>
    </location>
    <ligand>
        <name>substrate</name>
    </ligand>
</feature>
<feature type="binding site" evidence="1">
    <location>
        <position position="186"/>
    </location>
    <ligand>
        <name>substrate</name>
    </ligand>
</feature>
<feature type="binding site" evidence="1">
    <location>
        <position position="195"/>
    </location>
    <ligand>
        <name>substrate</name>
    </ligand>
</feature>
<feature type="binding site" evidence="1">
    <location>
        <position position="215"/>
    </location>
    <ligand>
        <name>substrate</name>
    </ligand>
</feature>
<feature type="binding site" evidence="1">
    <location>
        <position position="216"/>
    </location>
    <ligand>
        <name>substrate</name>
    </ligand>
</feature>
<comment type="function">
    <text evidence="1">Catalyzes the decarboxylation of orotidine 5'-monophosphate (OMP) to uridine 5'-monophosphate (UMP).</text>
</comment>
<comment type="catalytic activity">
    <reaction evidence="1">
        <text>orotidine 5'-phosphate + H(+) = UMP + CO2</text>
        <dbReference type="Rhea" id="RHEA:11596"/>
        <dbReference type="ChEBI" id="CHEBI:15378"/>
        <dbReference type="ChEBI" id="CHEBI:16526"/>
        <dbReference type="ChEBI" id="CHEBI:57538"/>
        <dbReference type="ChEBI" id="CHEBI:57865"/>
        <dbReference type="EC" id="4.1.1.23"/>
    </reaction>
</comment>
<comment type="pathway">
    <text evidence="1">Pyrimidine metabolism; UMP biosynthesis via de novo pathway; UMP from orotate: step 2/2.</text>
</comment>
<comment type="subunit">
    <text evidence="1">Homodimer.</text>
</comment>
<comment type="similarity">
    <text evidence="1">Belongs to the OMP decarboxylase family. Type 1 subfamily.</text>
</comment>
<keyword id="KW-0210">Decarboxylase</keyword>
<keyword id="KW-0456">Lyase</keyword>
<keyword id="KW-0665">Pyrimidine biosynthesis</keyword>
<keyword id="KW-1185">Reference proteome</keyword>
<protein>
    <recommendedName>
        <fullName evidence="1">Orotidine 5'-phosphate decarboxylase</fullName>
        <ecNumber evidence="1">4.1.1.23</ecNumber>
    </recommendedName>
    <alternativeName>
        <fullName evidence="1">OMP decarboxylase</fullName>
        <shortName evidence="1">OMPDCase</shortName>
        <shortName evidence="1">OMPdecase</shortName>
    </alternativeName>
</protein>
<reference key="1">
    <citation type="submission" date="2006-10" db="EMBL/GenBank/DDBJ databases">
        <title>Complete sequence of chromosome of Pelobacter propionicus DSM 2379.</title>
        <authorList>
            <consortium name="US DOE Joint Genome Institute"/>
            <person name="Copeland A."/>
            <person name="Lucas S."/>
            <person name="Lapidus A."/>
            <person name="Barry K."/>
            <person name="Detter J.C."/>
            <person name="Glavina del Rio T."/>
            <person name="Hammon N."/>
            <person name="Israni S."/>
            <person name="Dalin E."/>
            <person name="Tice H."/>
            <person name="Pitluck S."/>
            <person name="Saunders E."/>
            <person name="Brettin T."/>
            <person name="Bruce D."/>
            <person name="Han C."/>
            <person name="Tapia R."/>
            <person name="Schmutz J."/>
            <person name="Larimer F."/>
            <person name="Land M."/>
            <person name="Hauser L."/>
            <person name="Kyrpides N."/>
            <person name="Kim E."/>
            <person name="Lovley D."/>
            <person name="Richardson P."/>
        </authorList>
    </citation>
    <scope>NUCLEOTIDE SEQUENCE [LARGE SCALE GENOMIC DNA]</scope>
    <source>
        <strain>DSM 2379 / NBRC 103807 / OttBd1</strain>
    </source>
</reference>
<accession>A1APM0</accession>
<sequence length="240" mass="25989">MNRDEARKKIIFALDVNGIAEIDRYAGLLSDRVGMFKIGKELFTACGPEAVATVRRHGGQVFLDLKYHDIPNTVAKAMLEAARLGVQLANLHALGGLEMMETAASAVRREFGDDRPRLLAVTILTSSTAETLRRVGIDHPVEEMVVRLACLAREAGMDGVVASPREIGLIRQACGPDFLIVTPGVRPSFASQDDQKRIMSPDDAVREGADYLVIGRPIAKADDPVRAVDMIVDEIVAGCP</sequence>
<evidence type="ECO:0000255" key="1">
    <source>
        <dbReference type="HAMAP-Rule" id="MF_01200"/>
    </source>
</evidence>
<dbReference type="EC" id="4.1.1.23" evidence="1"/>
<dbReference type="EMBL" id="CP000482">
    <property type="protein sequence ID" value="ABK99290.1"/>
    <property type="molecule type" value="Genomic_DNA"/>
</dbReference>
<dbReference type="RefSeq" id="WP_011735567.1">
    <property type="nucleotide sequence ID" value="NC_008609.1"/>
</dbReference>
<dbReference type="SMR" id="A1APM0"/>
<dbReference type="STRING" id="338966.Ppro_1676"/>
<dbReference type="KEGG" id="ppd:Ppro_1676"/>
<dbReference type="eggNOG" id="COG0284">
    <property type="taxonomic scope" value="Bacteria"/>
</dbReference>
<dbReference type="HOGENOM" id="CLU_067069_0_0_7"/>
<dbReference type="OrthoDB" id="9806203at2"/>
<dbReference type="UniPathway" id="UPA00070">
    <property type="reaction ID" value="UER00120"/>
</dbReference>
<dbReference type="Proteomes" id="UP000006732">
    <property type="component" value="Chromosome"/>
</dbReference>
<dbReference type="GO" id="GO:0005829">
    <property type="term" value="C:cytosol"/>
    <property type="evidence" value="ECO:0007669"/>
    <property type="project" value="TreeGrafter"/>
</dbReference>
<dbReference type="GO" id="GO:0004590">
    <property type="term" value="F:orotidine-5'-phosphate decarboxylase activity"/>
    <property type="evidence" value="ECO:0007669"/>
    <property type="project" value="UniProtKB-UniRule"/>
</dbReference>
<dbReference type="GO" id="GO:0006207">
    <property type="term" value="P:'de novo' pyrimidine nucleobase biosynthetic process"/>
    <property type="evidence" value="ECO:0007669"/>
    <property type="project" value="InterPro"/>
</dbReference>
<dbReference type="GO" id="GO:0044205">
    <property type="term" value="P:'de novo' UMP biosynthetic process"/>
    <property type="evidence" value="ECO:0007669"/>
    <property type="project" value="UniProtKB-UniRule"/>
</dbReference>
<dbReference type="CDD" id="cd04725">
    <property type="entry name" value="OMP_decarboxylase_like"/>
    <property type="match status" value="1"/>
</dbReference>
<dbReference type="FunFam" id="3.20.20.70:FF:000015">
    <property type="entry name" value="Orotidine 5'-phosphate decarboxylase"/>
    <property type="match status" value="1"/>
</dbReference>
<dbReference type="Gene3D" id="3.20.20.70">
    <property type="entry name" value="Aldolase class I"/>
    <property type="match status" value="1"/>
</dbReference>
<dbReference type="HAMAP" id="MF_01200_B">
    <property type="entry name" value="OMPdecase_type1_B"/>
    <property type="match status" value="1"/>
</dbReference>
<dbReference type="InterPro" id="IPR013785">
    <property type="entry name" value="Aldolase_TIM"/>
</dbReference>
<dbReference type="InterPro" id="IPR014732">
    <property type="entry name" value="OMPdecase"/>
</dbReference>
<dbReference type="InterPro" id="IPR018089">
    <property type="entry name" value="OMPdecase_AS"/>
</dbReference>
<dbReference type="InterPro" id="IPR047596">
    <property type="entry name" value="OMPdecase_bac"/>
</dbReference>
<dbReference type="InterPro" id="IPR001754">
    <property type="entry name" value="OMPdeCOase_dom"/>
</dbReference>
<dbReference type="InterPro" id="IPR011060">
    <property type="entry name" value="RibuloseP-bd_barrel"/>
</dbReference>
<dbReference type="NCBIfam" id="NF001273">
    <property type="entry name" value="PRK00230.1"/>
    <property type="match status" value="1"/>
</dbReference>
<dbReference type="NCBIfam" id="TIGR01740">
    <property type="entry name" value="pyrF"/>
    <property type="match status" value="1"/>
</dbReference>
<dbReference type="PANTHER" id="PTHR32119">
    <property type="entry name" value="OROTIDINE 5'-PHOSPHATE DECARBOXYLASE"/>
    <property type="match status" value="1"/>
</dbReference>
<dbReference type="PANTHER" id="PTHR32119:SF2">
    <property type="entry name" value="OROTIDINE 5'-PHOSPHATE DECARBOXYLASE"/>
    <property type="match status" value="1"/>
</dbReference>
<dbReference type="Pfam" id="PF00215">
    <property type="entry name" value="OMPdecase"/>
    <property type="match status" value="1"/>
</dbReference>
<dbReference type="SMART" id="SM00934">
    <property type="entry name" value="OMPdecase"/>
    <property type="match status" value="1"/>
</dbReference>
<dbReference type="SUPFAM" id="SSF51366">
    <property type="entry name" value="Ribulose-phoshate binding barrel"/>
    <property type="match status" value="1"/>
</dbReference>
<dbReference type="PROSITE" id="PS00156">
    <property type="entry name" value="OMPDECASE"/>
    <property type="match status" value="1"/>
</dbReference>
<name>PYRF_PELPD</name>
<organism>
    <name type="scientific">Pelobacter propionicus (strain DSM 2379 / NBRC 103807 / OttBd1)</name>
    <dbReference type="NCBI Taxonomy" id="338966"/>
    <lineage>
        <taxon>Bacteria</taxon>
        <taxon>Pseudomonadati</taxon>
        <taxon>Thermodesulfobacteriota</taxon>
        <taxon>Desulfuromonadia</taxon>
        <taxon>Desulfuromonadales</taxon>
        <taxon>Desulfuromonadaceae</taxon>
        <taxon>Pelobacter</taxon>
    </lineage>
</organism>